<keyword id="KW-0903">Direct protein sequencing</keyword>
<keyword id="KW-0872">Ion channel impairing toxin</keyword>
<keyword id="KW-0528">Neurotoxin</keyword>
<keyword id="KW-0964">Secreted</keyword>
<keyword id="KW-0800">Toxin</keyword>
<keyword id="KW-0738">Voltage-gated sodium channel impairing toxin</keyword>
<dbReference type="GO" id="GO:0005576">
    <property type="term" value="C:extracellular region"/>
    <property type="evidence" value="ECO:0007669"/>
    <property type="project" value="UniProtKB-SubCell"/>
</dbReference>
<dbReference type="GO" id="GO:0019871">
    <property type="term" value="F:sodium channel inhibitor activity"/>
    <property type="evidence" value="ECO:0007669"/>
    <property type="project" value="InterPro"/>
</dbReference>
<dbReference type="GO" id="GO:0090729">
    <property type="term" value="F:toxin activity"/>
    <property type="evidence" value="ECO:0007669"/>
    <property type="project" value="UniProtKB-KW"/>
</dbReference>
<dbReference type="InterPro" id="IPR044062">
    <property type="entry name" value="LCN-type_CS_alpha_beta_dom"/>
</dbReference>
<dbReference type="InterPro" id="IPR002061">
    <property type="entry name" value="Scorpion_toxinL/defensin"/>
</dbReference>
<dbReference type="Pfam" id="PF00537">
    <property type="entry name" value="Toxin_3"/>
    <property type="match status" value="1"/>
</dbReference>
<dbReference type="PROSITE" id="PS51863">
    <property type="entry name" value="LCN_CSAB"/>
    <property type="match status" value="1"/>
</dbReference>
<reference key="1">
    <citation type="journal article" date="2001" name="J. Nat. Toxins">
        <title>Isolation, purification and N-terminal sequencing of a bioactive peptide that alters action potentials from the venom of Buthus martensii Karsch.</title>
        <authorList>
            <person name="Hahin R."/>
            <person name="Chen Z."/>
            <person name="Reddy G."/>
            <person name="Li Y."/>
        </authorList>
    </citation>
    <scope>PROTEIN SEQUENCE</scope>
    <scope>CHARACTERIZATION</scope>
    <source>
        <tissue>Venom</tissue>
    </source>
</reference>
<proteinExistence type="evidence at protein level"/>
<feature type="chain" id="PRO_0000066754" description="Neurotoxin BmK 18(2)">
    <location>
        <begin position="1"/>
        <end position="20" status="greater than"/>
    </location>
</feature>
<feature type="domain" description="LCN-type CS-alpha/beta" evidence="1">
    <location>
        <begin position="2"/>
        <end position="20" status="greater than"/>
    </location>
</feature>
<feature type="non-terminal residue">
    <location>
        <position position="20"/>
    </location>
</feature>
<evidence type="ECO:0000255" key="1">
    <source>
        <dbReference type="PROSITE-ProRule" id="PRU01210"/>
    </source>
</evidence>
<evidence type="ECO:0000305" key="2"/>
<protein>
    <recommendedName>
        <fullName>Neurotoxin BmK 18(2)</fullName>
    </recommendedName>
</protein>
<organism>
    <name type="scientific">Olivierus martensii</name>
    <name type="common">Manchurian scorpion</name>
    <name type="synonym">Mesobuthus martensii</name>
    <dbReference type="NCBI Taxonomy" id="34649"/>
    <lineage>
        <taxon>Eukaryota</taxon>
        <taxon>Metazoa</taxon>
        <taxon>Ecdysozoa</taxon>
        <taxon>Arthropoda</taxon>
        <taxon>Chelicerata</taxon>
        <taxon>Arachnida</taxon>
        <taxon>Scorpiones</taxon>
        <taxon>Buthida</taxon>
        <taxon>Buthoidea</taxon>
        <taxon>Buthidae</taxon>
        <taxon>Olivierus</taxon>
    </lineage>
</organism>
<accession>P58570</accession>
<comment type="function">
    <text>Binds to sodium channels (Nav) and inhibits the inactivation of the activated channels, thereby blocking neuronal transmission.</text>
</comment>
<comment type="subcellular location">
    <subcellularLocation>
        <location>Secreted</location>
    </subcellularLocation>
</comment>
<comment type="tissue specificity">
    <text>Expressed by the venom gland.</text>
</comment>
<comment type="domain">
    <text evidence="2">Has the structural arrangement of an alpha-helix connected to antiparallel beta-sheets by disulfide bonds (CS-alpha/beta).</text>
</comment>
<comment type="similarity">
    <text evidence="2">Belongs to the long (4 C-C) scorpion toxin superfamily. Sodium channel inhibitor family. Alpha subfamily.</text>
</comment>
<sequence length="20" mass="2349">VRDAYIAEDYDCVYHCARDA</sequence>
<name>SC18_OLIMR</name>